<keyword id="KW-0488">Methylation</keyword>
<keyword id="KW-0687">Ribonucleoprotein</keyword>
<keyword id="KW-0689">Ribosomal protein</keyword>
<keyword id="KW-0694">RNA-binding</keyword>
<keyword id="KW-0699">rRNA-binding</keyword>
<keyword id="KW-0820">tRNA-binding</keyword>
<proteinExistence type="inferred from homology"/>
<comment type="function">
    <text evidence="2">With S4 and S5 plays an important role in translational accuracy.</text>
</comment>
<comment type="function">
    <text evidence="2">Interacts with and stabilizes bases of the 16S rRNA that are involved in tRNA selection in the A site and with the mRNA backbone. Located at the interface of the 30S and 50S subunits, it traverses the body of the 30S subunit contacting proteins on the other side and probably holding the rRNA structure together. The combined cluster of proteins S8, S12 and S17 appears to hold together the shoulder and platform of the 30S subunit.</text>
</comment>
<comment type="subunit">
    <text evidence="2">Part of the 30S ribosomal subunit. Contacts proteins S8 and S17. May interact with IF1 in the 30S initiation complex.</text>
</comment>
<comment type="similarity">
    <text evidence="2">Belongs to the universal ribosomal protein uS12 family.</text>
</comment>
<feature type="chain" id="PRO_1000049814" description="Small ribosomal subunit protein uS12">
    <location>
        <begin position="1"/>
        <end position="137"/>
    </location>
</feature>
<feature type="region of interest" description="Disordered" evidence="3">
    <location>
        <begin position="1"/>
        <end position="55"/>
    </location>
</feature>
<feature type="region of interest" description="Disordered" evidence="3">
    <location>
        <begin position="118"/>
        <end position="137"/>
    </location>
</feature>
<feature type="modified residue" description="3-methylthioaspartic acid" evidence="1">
    <location>
        <position position="102"/>
    </location>
</feature>
<reference key="1">
    <citation type="journal article" date="2008" name="Antimicrob. Agents Chemother.">
        <title>Mutated response regulator graR is responsible for phenotypic conversion of Staphylococcus aureus from heterogeneous vancomycin-intermediate resistance to vancomycin-intermediate resistance.</title>
        <authorList>
            <person name="Neoh H.-M."/>
            <person name="Cui L."/>
            <person name="Yuzawa H."/>
            <person name="Takeuchi F."/>
            <person name="Matsuo M."/>
            <person name="Hiramatsu K."/>
        </authorList>
    </citation>
    <scope>NUCLEOTIDE SEQUENCE [LARGE SCALE GENOMIC DNA]</scope>
    <source>
        <strain>Mu3 / ATCC 700698</strain>
    </source>
</reference>
<gene>
    <name evidence="2" type="primary">rpsL</name>
    <name type="ordered locus">SAHV_0543</name>
</gene>
<name>RS12_STAA1</name>
<protein>
    <recommendedName>
        <fullName evidence="2">Small ribosomal subunit protein uS12</fullName>
    </recommendedName>
    <alternativeName>
        <fullName evidence="4">30S ribosomal protein S12</fullName>
    </alternativeName>
</protein>
<dbReference type="EMBL" id="AP009324">
    <property type="protein sequence ID" value="BAF77426.1"/>
    <property type="molecule type" value="Genomic_DNA"/>
</dbReference>
<dbReference type="RefSeq" id="WP_001142337.1">
    <property type="nucleotide sequence ID" value="NC_009782.1"/>
</dbReference>
<dbReference type="SMR" id="A7WYX1"/>
<dbReference type="GeneID" id="98344879"/>
<dbReference type="KEGG" id="saw:SAHV_0543"/>
<dbReference type="HOGENOM" id="CLU_104295_1_2_9"/>
<dbReference type="GO" id="GO:0015935">
    <property type="term" value="C:small ribosomal subunit"/>
    <property type="evidence" value="ECO:0007669"/>
    <property type="project" value="InterPro"/>
</dbReference>
<dbReference type="GO" id="GO:0019843">
    <property type="term" value="F:rRNA binding"/>
    <property type="evidence" value="ECO:0007669"/>
    <property type="project" value="UniProtKB-UniRule"/>
</dbReference>
<dbReference type="GO" id="GO:0003735">
    <property type="term" value="F:structural constituent of ribosome"/>
    <property type="evidence" value="ECO:0007669"/>
    <property type="project" value="InterPro"/>
</dbReference>
<dbReference type="GO" id="GO:0000049">
    <property type="term" value="F:tRNA binding"/>
    <property type="evidence" value="ECO:0007669"/>
    <property type="project" value="UniProtKB-UniRule"/>
</dbReference>
<dbReference type="GO" id="GO:0006412">
    <property type="term" value="P:translation"/>
    <property type="evidence" value="ECO:0007669"/>
    <property type="project" value="UniProtKB-UniRule"/>
</dbReference>
<dbReference type="CDD" id="cd03368">
    <property type="entry name" value="Ribosomal_S12"/>
    <property type="match status" value="1"/>
</dbReference>
<dbReference type="FunFam" id="2.40.50.140:FF:000001">
    <property type="entry name" value="30S ribosomal protein S12"/>
    <property type="match status" value="1"/>
</dbReference>
<dbReference type="Gene3D" id="2.40.50.140">
    <property type="entry name" value="Nucleic acid-binding proteins"/>
    <property type="match status" value="1"/>
</dbReference>
<dbReference type="HAMAP" id="MF_00403_B">
    <property type="entry name" value="Ribosomal_uS12_B"/>
    <property type="match status" value="1"/>
</dbReference>
<dbReference type="InterPro" id="IPR012340">
    <property type="entry name" value="NA-bd_OB-fold"/>
</dbReference>
<dbReference type="InterPro" id="IPR006032">
    <property type="entry name" value="Ribosomal_uS12"/>
</dbReference>
<dbReference type="InterPro" id="IPR005679">
    <property type="entry name" value="Ribosomal_uS12_bac"/>
</dbReference>
<dbReference type="NCBIfam" id="TIGR00981">
    <property type="entry name" value="rpsL_bact"/>
    <property type="match status" value="1"/>
</dbReference>
<dbReference type="PANTHER" id="PTHR11652">
    <property type="entry name" value="30S RIBOSOMAL PROTEIN S12 FAMILY MEMBER"/>
    <property type="match status" value="1"/>
</dbReference>
<dbReference type="Pfam" id="PF00164">
    <property type="entry name" value="Ribosom_S12_S23"/>
    <property type="match status" value="1"/>
</dbReference>
<dbReference type="PIRSF" id="PIRSF002133">
    <property type="entry name" value="Ribosomal_S12/S23"/>
    <property type="match status" value="1"/>
</dbReference>
<dbReference type="PRINTS" id="PR01034">
    <property type="entry name" value="RIBOSOMALS12"/>
</dbReference>
<dbReference type="SUPFAM" id="SSF50249">
    <property type="entry name" value="Nucleic acid-binding proteins"/>
    <property type="match status" value="1"/>
</dbReference>
<dbReference type="PROSITE" id="PS00055">
    <property type="entry name" value="RIBOSOMAL_S12"/>
    <property type="match status" value="1"/>
</dbReference>
<evidence type="ECO:0000250" key="1"/>
<evidence type="ECO:0000255" key="2">
    <source>
        <dbReference type="HAMAP-Rule" id="MF_00403"/>
    </source>
</evidence>
<evidence type="ECO:0000256" key="3">
    <source>
        <dbReference type="SAM" id="MobiDB-lite"/>
    </source>
</evidence>
<evidence type="ECO:0000305" key="4"/>
<sequence length="137" mass="15287">MPTINQLVRKPRQSKIKKSDSPALNKGFNSKKKKFTDLNSPQKRGVCTRVGTMTPKKPNSALRKYARVRLSNNIEINAYIPGIGHNLQEHSVVLVRGGRVKDLPGVRYHIVRGALDTSGVDGRRQGRSLYGTKKPKN</sequence>
<organism>
    <name type="scientific">Staphylococcus aureus (strain Mu3 / ATCC 700698)</name>
    <dbReference type="NCBI Taxonomy" id="418127"/>
    <lineage>
        <taxon>Bacteria</taxon>
        <taxon>Bacillati</taxon>
        <taxon>Bacillota</taxon>
        <taxon>Bacilli</taxon>
        <taxon>Bacillales</taxon>
        <taxon>Staphylococcaceae</taxon>
        <taxon>Staphylococcus</taxon>
    </lineage>
</organism>
<accession>A7WYX1</accession>